<protein>
    <recommendedName>
        <fullName>Pleckstrin homology-like domain family B member 1</fullName>
    </recommendedName>
    <alternativeName>
        <fullName>Protein LL5-alpha</fullName>
    </alternativeName>
</protein>
<sequence length="1377" mass="151162">MDALNRNQIGPGCQTQTMVQKGPLDLIETGKGLKVQTDKPHLVSLGSGRLSTAITLLPLEEGRTVIGSAARDISLQGPGLAPEHCYIENLRGTLTLYPCGNACTIDGLPVRQPTRLTQGCMLCLGQSTFLRFNHPAEAKWMKSMIPAGGRAPGPPYSPVPAESESLVNGNHTPQTATRGPSACASHSSLVSSIEKDLQEIMDSLVLEEPGAAGKKPAATSPLSPMANGGRYLLSPPTSPGAMSVGSSYENTSPAFSPLSSPASSGSCASHSPSGQEPGPSVPPLVPARSSSYHLALQPPQSRPSGARSESPRLSRKGGHERPPSPGLRGLLTDSPAATVLAEARRATESPRLGGQLPVVAISLSEYPASGALSQPTSIPGSPKFQPPVPAPRNKIGTLQDRPPSPFREPPGSERVLTTSPSRQLVGRTFSDGLATRTLQPPESPRLGRRGLDSMRELPPLSPSLSRRALSPLPTRTTPDPKLNREVAESPRPRRWAAHGASPEDFSLTLGARGRRTRSPSPTLGESLAPHKGSFSGRLSPAYSLGSLTGASPCQSPCVQRKLSSGDLRVPVTRERKNSITEISDNEDDLLEYHRRQRQERLREQEMERLERQRLETILNLCAEYSRADGGPEAGELPSIGEATAALALAGRRPSRGLAGASGRSSEEPGVATQRLWESMERSDEENLKEECSSTESTQQEHEDAPSTKLQGEVLALEEERAQVLGHVEQLKVRVKELEQQLQESAREAEMERALLQGEREAERALLQKEQKAVDQLQEKLVALETGIQKERDKEAEALETETKLFEDLEFQQLERESRVEEERELAGQGLLRSKAELLRSIAKRKERLAILDSQAGQIRAQAVQESERLARDKNASLQLLQKEKEKLTVLERRYHSLTGGRPFPKTTSTLKEMEKLLLPAVDLEQWYQELMAGLGTGPAAASPHSSPPPLPAKASRQLQVYRSKMDGEATSPLPRTRSGPLPSSSGSSSSSSQLSVATLGRSPSPKSALLTQNGTGSLPRNLAATLQDIETKRQLALQQKGQQVIEEQRRRLAELKQKAAAEAQCQWDALHGAAPFPAGPSGFPPLMHHSILHHLPAGRERGEEGEHAYDTLSLESSDSMETSISTGGNSACSPDNMSSASGLDMGKIEEMEKMLKEAHAEKNRLMESREREMELRRQALEEERRRREQVERRLQSESARRQQLVEKEVKMREKQFSQARPLTRYLPIRKEDFDLKTHIESSGHGVDTCLHVVLSSKVCRGYLVKMGGKIKSWKKRWFVFDRLKRTLSYYVDKHETKLKGVIYFQAIEEVYYDHLRSAAKKRFFRFTMVTESPNPALTFCVKTHDRLYYMVAPSAEAMRIWMDVIVTGAEGYTQFMN</sequence>
<accession>Q86UU1</accession>
<accession>B0YJ63</accession>
<accession>B0YJ64</accession>
<accession>O75133</accession>
<accession>Q4KMF8</accession>
<accession>Q8TEQ2</accession>
<reference key="1">
    <citation type="submission" date="2002-10" db="EMBL/GenBank/DDBJ databases">
        <title>Identification of a 500-kb region of common allelic loss in chromosome 11q23 in non-MYCN amplified type of neuroblastoma.</title>
        <authorList>
            <person name="Kubo T."/>
            <person name="Arai Y."/>
            <person name="Ohira M."/>
            <person name="Gamou T."/>
            <person name="Maeno G."/>
            <person name="Sakiyama T."/>
            <person name="Toyoda A."/>
            <person name="Hattori M."/>
            <person name="Sakaki Y."/>
            <person name="Nakagawara A."/>
            <person name="Ohki M."/>
        </authorList>
    </citation>
    <scope>NUCLEOTIDE SEQUENCE [MRNA] (ISOFORM 1)</scope>
</reference>
<reference key="2">
    <citation type="journal article" date="1998" name="DNA Res.">
        <title>Prediction of the coding sequences of unidentified human genes. X. The complete sequences of 100 new cDNA clones from brain which can code for large proteins in vitro.</title>
        <authorList>
            <person name="Ishikawa K."/>
            <person name="Nagase T."/>
            <person name="Suyama M."/>
            <person name="Miyajima N."/>
            <person name="Tanaka A."/>
            <person name="Kotani H."/>
            <person name="Nomura N."/>
            <person name="Ohara O."/>
        </authorList>
    </citation>
    <scope>NUCLEOTIDE SEQUENCE [LARGE SCALE MRNA] (ISOFORM 1)</scope>
    <source>
        <tissue>Brain</tissue>
    </source>
</reference>
<reference key="3">
    <citation type="journal article" date="2002" name="DNA Res.">
        <title>Construction of expression-ready cDNA clones for KIAA genes: manual curation of 330 KIAA cDNA clones.</title>
        <authorList>
            <person name="Nakajima D."/>
            <person name="Okazaki N."/>
            <person name="Yamakawa H."/>
            <person name="Kikuno R."/>
            <person name="Ohara O."/>
            <person name="Nagase T."/>
        </authorList>
    </citation>
    <scope>SEQUENCE REVISION</scope>
</reference>
<reference key="4">
    <citation type="journal article" date="2004" name="Nat. Genet.">
        <title>Complete sequencing and characterization of 21,243 full-length human cDNAs.</title>
        <authorList>
            <person name="Ota T."/>
            <person name="Suzuki Y."/>
            <person name="Nishikawa T."/>
            <person name="Otsuki T."/>
            <person name="Sugiyama T."/>
            <person name="Irie R."/>
            <person name="Wakamatsu A."/>
            <person name="Hayashi K."/>
            <person name="Sato H."/>
            <person name="Nagai K."/>
            <person name="Kimura K."/>
            <person name="Makita H."/>
            <person name="Sekine M."/>
            <person name="Obayashi M."/>
            <person name="Nishi T."/>
            <person name="Shibahara T."/>
            <person name="Tanaka T."/>
            <person name="Ishii S."/>
            <person name="Yamamoto J."/>
            <person name="Saito K."/>
            <person name="Kawai Y."/>
            <person name="Isono Y."/>
            <person name="Nakamura Y."/>
            <person name="Nagahari K."/>
            <person name="Murakami K."/>
            <person name="Yasuda T."/>
            <person name="Iwayanagi T."/>
            <person name="Wagatsuma M."/>
            <person name="Shiratori A."/>
            <person name="Sudo H."/>
            <person name="Hosoiri T."/>
            <person name="Kaku Y."/>
            <person name="Kodaira H."/>
            <person name="Kondo H."/>
            <person name="Sugawara M."/>
            <person name="Takahashi M."/>
            <person name="Kanda K."/>
            <person name="Yokoi T."/>
            <person name="Furuya T."/>
            <person name="Kikkawa E."/>
            <person name="Omura Y."/>
            <person name="Abe K."/>
            <person name="Kamihara K."/>
            <person name="Katsuta N."/>
            <person name="Sato K."/>
            <person name="Tanikawa M."/>
            <person name="Yamazaki M."/>
            <person name="Ninomiya K."/>
            <person name="Ishibashi T."/>
            <person name="Yamashita H."/>
            <person name="Murakawa K."/>
            <person name="Fujimori K."/>
            <person name="Tanai H."/>
            <person name="Kimata M."/>
            <person name="Watanabe M."/>
            <person name="Hiraoka S."/>
            <person name="Chiba Y."/>
            <person name="Ishida S."/>
            <person name="Ono Y."/>
            <person name="Takiguchi S."/>
            <person name="Watanabe S."/>
            <person name="Yosida M."/>
            <person name="Hotuta T."/>
            <person name="Kusano J."/>
            <person name="Kanehori K."/>
            <person name="Takahashi-Fujii A."/>
            <person name="Hara H."/>
            <person name="Tanase T.-O."/>
            <person name="Nomura Y."/>
            <person name="Togiya S."/>
            <person name="Komai F."/>
            <person name="Hara R."/>
            <person name="Takeuchi K."/>
            <person name="Arita M."/>
            <person name="Imose N."/>
            <person name="Musashino K."/>
            <person name="Yuuki H."/>
            <person name="Oshima A."/>
            <person name="Sasaki N."/>
            <person name="Aotsuka S."/>
            <person name="Yoshikawa Y."/>
            <person name="Matsunawa H."/>
            <person name="Ichihara T."/>
            <person name="Shiohata N."/>
            <person name="Sano S."/>
            <person name="Moriya S."/>
            <person name="Momiyama H."/>
            <person name="Satoh N."/>
            <person name="Takami S."/>
            <person name="Terashima Y."/>
            <person name="Suzuki O."/>
            <person name="Nakagawa S."/>
            <person name="Senoh A."/>
            <person name="Mizoguchi H."/>
            <person name="Goto Y."/>
            <person name="Shimizu F."/>
            <person name="Wakebe H."/>
            <person name="Hishigaki H."/>
            <person name="Watanabe T."/>
            <person name="Sugiyama A."/>
            <person name="Takemoto M."/>
            <person name="Kawakami B."/>
            <person name="Yamazaki M."/>
            <person name="Watanabe K."/>
            <person name="Kumagai A."/>
            <person name="Itakura S."/>
            <person name="Fukuzumi Y."/>
            <person name="Fujimori Y."/>
            <person name="Komiyama M."/>
            <person name="Tashiro H."/>
            <person name="Tanigami A."/>
            <person name="Fujiwara T."/>
            <person name="Ono T."/>
            <person name="Yamada K."/>
            <person name="Fujii Y."/>
            <person name="Ozaki K."/>
            <person name="Hirao M."/>
            <person name="Ohmori Y."/>
            <person name="Kawabata A."/>
            <person name="Hikiji T."/>
            <person name="Kobatake N."/>
            <person name="Inagaki H."/>
            <person name="Ikema Y."/>
            <person name="Okamoto S."/>
            <person name="Okitani R."/>
            <person name="Kawakami T."/>
            <person name="Noguchi S."/>
            <person name="Itoh T."/>
            <person name="Shigeta K."/>
            <person name="Senba T."/>
            <person name="Matsumura K."/>
            <person name="Nakajima Y."/>
            <person name="Mizuno T."/>
            <person name="Morinaga M."/>
            <person name="Sasaki M."/>
            <person name="Togashi T."/>
            <person name="Oyama M."/>
            <person name="Hata H."/>
            <person name="Watanabe M."/>
            <person name="Komatsu T."/>
            <person name="Mizushima-Sugano J."/>
            <person name="Satoh T."/>
            <person name="Shirai Y."/>
            <person name="Takahashi Y."/>
            <person name="Nakagawa K."/>
            <person name="Okumura K."/>
            <person name="Nagase T."/>
            <person name="Nomura N."/>
            <person name="Kikuchi H."/>
            <person name="Masuho Y."/>
            <person name="Yamashita R."/>
            <person name="Nakai K."/>
            <person name="Yada T."/>
            <person name="Nakamura Y."/>
            <person name="Ohara O."/>
            <person name="Isogai T."/>
            <person name="Sugano S."/>
        </authorList>
    </citation>
    <scope>NUCLEOTIDE SEQUENCE [LARGE SCALE MRNA] (ISOFORM 2)</scope>
    <source>
        <tissue>Spleen</tissue>
    </source>
</reference>
<reference key="5">
    <citation type="submission" date="2007-02" db="EMBL/GenBank/DDBJ databases">
        <authorList>
            <consortium name="NHLBI resequencing and genotyping service (RS&amp;G)"/>
        </authorList>
    </citation>
    <scope>NUCLEOTIDE SEQUENCE [GENOMIC DNA]</scope>
</reference>
<reference key="6">
    <citation type="journal article" date="2006" name="Nature">
        <title>Human chromosome 11 DNA sequence and analysis including novel gene identification.</title>
        <authorList>
            <person name="Taylor T.D."/>
            <person name="Noguchi H."/>
            <person name="Totoki Y."/>
            <person name="Toyoda A."/>
            <person name="Kuroki Y."/>
            <person name="Dewar K."/>
            <person name="Lloyd C."/>
            <person name="Itoh T."/>
            <person name="Takeda T."/>
            <person name="Kim D.-W."/>
            <person name="She X."/>
            <person name="Barlow K.F."/>
            <person name="Bloom T."/>
            <person name="Bruford E."/>
            <person name="Chang J.L."/>
            <person name="Cuomo C.A."/>
            <person name="Eichler E."/>
            <person name="FitzGerald M.G."/>
            <person name="Jaffe D.B."/>
            <person name="LaButti K."/>
            <person name="Nicol R."/>
            <person name="Park H.-S."/>
            <person name="Seaman C."/>
            <person name="Sougnez C."/>
            <person name="Yang X."/>
            <person name="Zimmer A.R."/>
            <person name="Zody M.C."/>
            <person name="Birren B.W."/>
            <person name="Nusbaum C."/>
            <person name="Fujiyama A."/>
            <person name="Hattori M."/>
            <person name="Rogers J."/>
            <person name="Lander E.S."/>
            <person name="Sakaki Y."/>
        </authorList>
    </citation>
    <scope>NUCLEOTIDE SEQUENCE [LARGE SCALE GENOMIC DNA]</scope>
</reference>
<reference key="7">
    <citation type="submission" date="2005-07" db="EMBL/GenBank/DDBJ databases">
        <authorList>
            <person name="Mural R.J."/>
            <person name="Istrail S."/>
            <person name="Sutton G.G."/>
            <person name="Florea L."/>
            <person name="Halpern A.L."/>
            <person name="Mobarry C.M."/>
            <person name="Lippert R."/>
            <person name="Walenz B."/>
            <person name="Shatkay H."/>
            <person name="Dew I."/>
            <person name="Miller J.R."/>
            <person name="Flanigan M.J."/>
            <person name="Edwards N.J."/>
            <person name="Bolanos R."/>
            <person name="Fasulo D."/>
            <person name="Halldorsson B.V."/>
            <person name="Hannenhalli S."/>
            <person name="Turner R."/>
            <person name="Yooseph S."/>
            <person name="Lu F."/>
            <person name="Nusskern D.R."/>
            <person name="Shue B.C."/>
            <person name="Zheng X.H."/>
            <person name="Zhong F."/>
            <person name="Delcher A.L."/>
            <person name="Huson D.H."/>
            <person name="Kravitz S.A."/>
            <person name="Mouchard L."/>
            <person name="Reinert K."/>
            <person name="Remington K.A."/>
            <person name="Clark A.G."/>
            <person name="Waterman M.S."/>
            <person name="Eichler E.E."/>
            <person name="Adams M.D."/>
            <person name="Hunkapiller M.W."/>
            <person name="Myers E.W."/>
            <person name="Venter J.C."/>
        </authorList>
    </citation>
    <scope>NUCLEOTIDE SEQUENCE [LARGE SCALE GENOMIC DNA]</scope>
</reference>
<reference key="8">
    <citation type="journal article" date="2004" name="Genome Res.">
        <title>The status, quality, and expansion of the NIH full-length cDNA project: the Mammalian Gene Collection (MGC).</title>
        <authorList>
            <consortium name="The MGC Project Team"/>
        </authorList>
    </citation>
    <scope>NUCLEOTIDE SEQUENCE [LARGE SCALE MRNA] (ISOFORM 3)</scope>
    <source>
        <tissue>Placenta</tissue>
    </source>
</reference>
<reference key="9">
    <citation type="journal article" date="2000" name="Biochem. J.">
        <title>Identification of pleckstrin-homology-domain-containing proteins with novel phosphoinositide-binding specificities.</title>
        <authorList>
            <person name="Dowler S.J."/>
            <person name="Currie R.A."/>
            <person name="Campbell D.G."/>
            <person name="Deak M."/>
            <person name="Kular G."/>
            <person name="Downes C.P."/>
            <person name="Alessi D.R."/>
        </authorList>
    </citation>
    <scope>BINDING TO PHOSPHOINOSITIDES</scope>
</reference>
<reference key="10">
    <citation type="journal article" date="2003" name="Int. J. Oncol.">
        <title>Identification and characterization of human LL5A gene and mouse Ll5a gene in silico.</title>
        <authorList>
            <person name="Katoh M."/>
            <person name="Katoh M."/>
        </authorList>
    </citation>
    <scope>ALTERNATIVE SPLICING (ISOFORMS 1 AND 2)</scope>
</reference>
<reference key="11">
    <citation type="journal article" date="2006" name="Cell">
        <title>Global, in vivo, and site-specific phosphorylation dynamics in signaling networks.</title>
        <authorList>
            <person name="Olsen J.V."/>
            <person name="Blagoev B."/>
            <person name="Gnad F."/>
            <person name="Macek B."/>
            <person name="Kumar C."/>
            <person name="Mortensen P."/>
            <person name="Mann M."/>
        </authorList>
    </citation>
    <scope>PHOSPHORYLATION [LARGE SCALE ANALYSIS] AT SER-324</scope>
    <scope>IDENTIFICATION BY MASS SPECTROMETRY [LARGE SCALE ANALYSIS]</scope>
    <source>
        <tissue>Cervix carcinoma</tissue>
    </source>
</reference>
<reference key="12">
    <citation type="journal article" date="2008" name="J. Proteome Res.">
        <title>Combining protein-based IMAC, peptide-based IMAC, and MudPIT for efficient phosphoproteomic analysis.</title>
        <authorList>
            <person name="Cantin G.T."/>
            <person name="Yi W."/>
            <person name="Lu B."/>
            <person name="Park S.K."/>
            <person name="Xu T."/>
            <person name="Lee J.-D."/>
            <person name="Yates J.R. III"/>
        </authorList>
    </citation>
    <scope>PHOSPHORYLATION [LARGE SCALE ANALYSIS] AT SER-501</scope>
    <scope>IDENTIFICATION BY MASS SPECTROMETRY [LARGE SCALE ANALYSIS]</scope>
    <source>
        <tissue>Cervix carcinoma</tissue>
    </source>
</reference>
<reference key="13">
    <citation type="journal article" date="2008" name="Proc. Natl. Acad. Sci. U.S.A.">
        <title>A quantitative atlas of mitotic phosphorylation.</title>
        <authorList>
            <person name="Dephoure N."/>
            <person name="Zhou C."/>
            <person name="Villen J."/>
            <person name="Beausoleil S.A."/>
            <person name="Bakalarski C.E."/>
            <person name="Elledge S.J."/>
            <person name="Gygi S.P."/>
        </authorList>
    </citation>
    <scope>PHOSPHORYLATION [LARGE SCALE ANALYSIS] AT SER-220; SER-223; SER-430; SER-443; SER-501; SER-520; SER-551; SER-555 AND SER-583</scope>
    <scope>IDENTIFICATION BY MASS SPECTROMETRY [LARGE SCALE ANALYSIS]</scope>
    <source>
        <tissue>Cervix carcinoma</tissue>
    </source>
</reference>
<reference key="14">
    <citation type="journal article" date="2010" name="Sci. Signal.">
        <title>Quantitative phosphoproteomics reveals widespread full phosphorylation site occupancy during mitosis.</title>
        <authorList>
            <person name="Olsen J.V."/>
            <person name="Vermeulen M."/>
            <person name="Santamaria A."/>
            <person name="Kumar C."/>
            <person name="Miller M.L."/>
            <person name="Jensen L.J."/>
            <person name="Gnad F."/>
            <person name="Cox J."/>
            <person name="Jensen T.S."/>
            <person name="Nigg E.A."/>
            <person name="Brunak S."/>
            <person name="Mann M."/>
        </authorList>
    </citation>
    <scope>PHOSPHORYLATION [LARGE SCALE ANALYSIS] AT SER-501</scope>
    <scope>IDENTIFICATION BY MASS SPECTROMETRY [LARGE SCALE ANALYSIS]</scope>
    <source>
        <tissue>Cervix carcinoma</tissue>
    </source>
</reference>
<reference key="15">
    <citation type="journal article" date="2011" name="Sci. Signal.">
        <title>System-wide temporal characterization of the proteome and phosphoproteome of human embryonic stem cell differentiation.</title>
        <authorList>
            <person name="Rigbolt K.T."/>
            <person name="Prokhorova T.A."/>
            <person name="Akimov V."/>
            <person name="Henningsen J."/>
            <person name="Johansen P.T."/>
            <person name="Kratchmarova I."/>
            <person name="Kassem M."/>
            <person name="Mann M."/>
            <person name="Olsen J.V."/>
            <person name="Blagoev B."/>
        </authorList>
    </citation>
    <scope>PHOSPHORYLATION [LARGE SCALE ANALYSIS] AT SER-520 AND THR-522</scope>
    <scope>IDENTIFICATION BY MASS SPECTROMETRY [LARGE SCALE ANALYSIS]</scope>
</reference>
<reference key="16">
    <citation type="journal article" date="2013" name="J. Proteome Res.">
        <title>Toward a comprehensive characterization of a human cancer cell phosphoproteome.</title>
        <authorList>
            <person name="Zhou H."/>
            <person name="Di Palma S."/>
            <person name="Preisinger C."/>
            <person name="Peng M."/>
            <person name="Polat A.N."/>
            <person name="Heck A.J."/>
            <person name="Mohammed S."/>
        </authorList>
    </citation>
    <scope>PHOSPHORYLATION [LARGE SCALE ANALYSIS] AT SER-192; SER-220; SER-324; SER-334; SER-404; SER-430; SER-443; SER-461; SER-489; SER-501; SER-518; SER-520; SER-563; SER-578; SER-583; SER-678 AND SER-971</scope>
    <scope>IDENTIFICATION BY MASS SPECTROMETRY [LARGE SCALE ANALYSIS]</scope>
    <source>
        <tissue>Cervix carcinoma</tissue>
        <tissue>Erythroleukemia</tissue>
    </source>
</reference>
<reference key="17">
    <citation type="journal article" date="2014" name="J. Proteomics">
        <title>An enzyme assisted RP-RPLC approach for in-depth analysis of human liver phosphoproteome.</title>
        <authorList>
            <person name="Bian Y."/>
            <person name="Song C."/>
            <person name="Cheng K."/>
            <person name="Dong M."/>
            <person name="Wang F."/>
            <person name="Huang J."/>
            <person name="Sun D."/>
            <person name="Wang L."/>
            <person name="Ye M."/>
            <person name="Zou H."/>
        </authorList>
    </citation>
    <scope>PHOSPHORYLATION [LARGE SCALE ANALYSIS] AT SER-324</scope>
    <scope>IDENTIFICATION BY MASS SPECTROMETRY [LARGE SCALE ANALYSIS]</scope>
    <source>
        <tissue>Liver</tissue>
    </source>
</reference>
<reference key="18">
    <citation type="journal article" date="2023" name="J. Med. Genet.">
        <title>Biallelic frameshift variants in PHLDB1 cause mild-type osteogenesis imperfecta with regressive spondylometaphyseal changes.</title>
        <authorList>
            <person name="Tuysuz B."/>
            <person name="Uludag Alkaya D."/>
            <person name="Geyik F."/>
            <person name="Alaylioglu M."/>
            <person name="Kasap B."/>
            <person name="Kurugoglu S."/>
            <person name="Akman Y.E."/>
            <person name="Vural M."/>
            <person name="Bilguvar K."/>
        </authorList>
    </citation>
    <scope>INVOLVEMENT IN OI23</scope>
</reference>
<evidence type="ECO:0000250" key="1">
    <source>
        <dbReference type="UniProtKB" id="Q6PDH0"/>
    </source>
</evidence>
<evidence type="ECO:0000255" key="2"/>
<evidence type="ECO:0000255" key="3">
    <source>
        <dbReference type="PROSITE-ProRule" id="PRU00145"/>
    </source>
</evidence>
<evidence type="ECO:0000256" key="4">
    <source>
        <dbReference type="SAM" id="MobiDB-lite"/>
    </source>
</evidence>
<evidence type="ECO:0000269" key="5">
    <source>
    </source>
</evidence>
<evidence type="ECO:0000303" key="6">
    <source>
    </source>
</evidence>
<evidence type="ECO:0000303" key="7">
    <source>
    </source>
</evidence>
<evidence type="ECO:0000305" key="8"/>
<evidence type="ECO:0007744" key="9">
    <source>
    </source>
</evidence>
<evidence type="ECO:0007744" key="10">
    <source>
    </source>
</evidence>
<evidence type="ECO:0007744" key="11">
    <source>
    </source>
</evidence>
<evidence type="ECO:0007744" key="12">
    <source>
    </source>
</evidence>
<evidence type="ECO:0007744" key="13">
    <source>
    </source>
</evidence>
<evidence type="ECO:0007744" key="14">
    <source>
    </source>
</evidence>
<evidence type="ECO:0007744" key="15">
    <source>
    </source>
</evidence>
<keyword id="KW-0025">Alternative splicing</keyword>
<keyword id="KW-0175">Coiled coil</keyword>
<keyword id="KW-0488">Methylation</keyword>
<keyword id="KW-1065">Osteogenesis imperfecta</keyword>
<keyword id="KW-0597">Phosphoprotein</keyword>
<keyword id="KW-1267">Proteomics identification</keyword>
<keyword id="KW-1185">Reference proteome</keyword>
<comment type="interaction">
    <interactant intactId="EBI-4289858">
        <id>Q86UU1</id>
    </interactant>
    <interactant intactId="EBI-713291">
        <id>P51114</id>
        <label>FXR1</label>
    </interactant>
    <organismsDiffer>false</organismsDiffer>
    <experiments>2</experiments>
</comment>
<comment type="alternative products">
    <event type="alternative splicing"/>
    <isoform>
        <id>Q86UU1-1</id>
        <name>1</name>
        <sequence type="displayed"/>
    </isoform>
    <isoform>
        <id>Q86UU1-2</id>
        <name>2</name>
        <sequence type="described" ref="VSP_016737 VSP_016740"/>
    </isoform>
    <isoform>
        <id>Q86UU1-3</id>
        <name>3</name>
        <sequence type="described" ref="VSP_016737 VSP_016738 VSP_016739"/>
    </isoform>
</comment>
<comment type="domain">
    <text>The PH domain mediates the binding to phosphoinositides.</text>
</comment>
<comment type="disease" evidence="5">
    <disease id="DI-06799">
        <name>Osteogenesis imperfecta 23</name>
        <acronym>OI23</acronym>
        <description>An autosomal recessive form of osteogenesis imperfecta, a disorder of bone formation characterized by low bone mass, bone fragility and susceptibility to fractures after minimal trauma. Disease severity ranges from very mild forms without fractures to intrauterine fractures and perinatal lethality. Extraskeletal manifestations, which affect a variable number of patients, are dentinogenesis imperfecta, hearing loss, and blue sclerae. OI23 is a mild form characterized by osteopenia with or without recurrent fractures, platyspondyly, short and bowed long bones, and widened metaphyses. Platyspondyly and metaphyseal enlargement is present in infancy but resolve in middle childhood.</description>
        <dbReference type="MIM" id="620639"/>
    </disease>
    <text>The disease may be caused by variants affecting the gene represented in this entry.</text>
</comment>
<comment type="miscellaneous">
    <molecule>Isoform 1</molecule>
    <text>Minor.</text>
</comment>
<comment type="miscellaneous">
    <molecule>Isoform 2</molecule>
    <text evidence="8">Major.</text>
</comment>
<comment type="sequence caution" evidence="8">
    <conflict type="erroneous initiation">
        <sequence resource="EMBL-CDS" id="BAA31613"/>
    </conflict>
    <text>Extended N-terminus.</text>
</comment>
<comment type="sequence caution" evidence="8">
    <conflict type="erroneous initiation">
        <sequence resource="EMBL-CDS" id="BAB84896"/>
    </conflict>
    <text>Extended N-terminus.</text>
</comment>
<feature type="chain" id="PRO_0000053891" description="Pleckstrin homology-like domain family B member 1">
    <location>
        <begin position="1"/>
        <end position="1377"/>
    </location>
</feature>
<feature type="domain" description="FHA">
    <location>
        <begin position="64"/>
        <end position="125"/>
    </location>
</feature>
<feature type="domain" description="PH" evidence="3">
    <location>
        <begin position="1256"/>
        <end position="1370"/>
    </location>
</feature>
<feature type="region of interest" description="Disordered" evidence="4">
    <location>
        <begin position="150"/>
        <end position="187"/>
    </location>
</feature>
<feature type="region of interest" description="Disordered" evidence="4">
    <location>
        <begin position="211"/>
        <end position="334"/>
    </location>
</feature>
<feature type="region of interest" description="Disordered" evidence="4">
    <location>
        <begin position="370"/>
        <end position="535"/>
    </location>
</feature>
<feature type="region of interest" description="Disordered" evidence="4">
    <location>
        <begin position="653"/>
        <end position="707"/>
    </location>
</feature>
<feature type="region of interest" description="Disordered" evidence="4">
    <location>
        <begin position="936"/>
        <end position="1019"/>
    </location>
</feature>
<feature type="region of interest" description="Disordered" evidence="4">
    <location>
        <begin position="1119"/>
        <end position="1138"/>
    </location>
</feature>
<feature type="coiled-coil region" evidence="2">
    <location>
        <begin position="683"/>
        <end position="809"/>
    </location>
</feature>
<feature type="coiled-coil region" evidence="2">
    <location>
        <begin position="1144"/>
        <end position="1208"/>
    </location>
</feature>
<feature type="compositionally biased region" description="Polar residues" evidence="4">
    <location>
        <begin position="165"/>
        <end position="178"/>
    </location>
</feature>
<feature type="compositionally biased region" description="Low complexity" evidence="4">
    <location>
        <begin position="252"/>
        <end position="273"/>
    </location>
</feature>
<feature type="compositionally biased region" description="Polar residues" evidence="4">
    <location>
        <begin position="288"/>
        <end position="303"/>
    </location>
</feature>
<feature type="compositionally biased region" description="Basic and acidic residues" evidence="4">
    <location>
        <begin position="309"/>
        <end position="322"/>
    </location>
</feature>
<feature type="compositionally biased region" description="Low complexity" evidence="4">
    <location>
        <begin position="456"/>
        <end position="473"/>
    </location>
</feature>
<feature type="compositionally biased region" description="Basic and acidic residues" evidence="4">
    <location>
        <begin position="481"/>
        <end position="491"/>
    </location>
</feature>
<feature type="compositionally biased region" description="Low complexity" evidence="4">
    <location>
        <begin position="653"/>
        <end position="663"/>
    </location>
</feature>
<feature type="compositionally biased region" description="Basic and acidic residues" evidence="4">
    <location>
        <begin position="677"/>
        <end position="691"/>
    </location>
</feature>
<feature type="compositionally biased region" description="Low complexity" evidence="4">
    <location>
        <begin position="971"/>
        <end position="992"/>
    </location>
</feature>
<feature type="compositionally biased region" description="Polar residues" evidence="4">
    <location>
        <begin position="1009"/>
        <end position="1018"/>
    </location>
</feature>
<feature type="modified residue" description="Phosphoserine" evidence="1">
    <location>
        <position position="51"/>
    </location>
</feature>
<feature type="modified residue" description="Asymmetric dimethylarginine" evidence="1">
    <location>
        <position position="131"/>
    </location>
</feature>
<feature type="modified residue" description="Phosphoserine" evidence="14">
    <location>
        <position position="192"/>
    </location>
</feature>
<feature type="modified residue" description="Phosphoserine" evidence="11 14">
    <location>
        <position position="220"/>
    </location>
</feature>
<feature type="modified residue" description="Phosphoserine" evidence="11">
    <location>
        <position position="223"/>
    </location>
</feature>
<feature type="modified residue" description="Phosphoserine" evidence="9 14 15">
    <location>
        <position position="324"/>
    </location>
</feature>
<feature type="modified residue" description="Phosphoserine" evidence="14">
    <location>
        <position position="334"/>
    </location>
</feature>
<feature type="modified residue" description="Phosphoserine" evidence="1">
    <location>
        <position position="381"/>
    </location>
</feature>
<feature type="modified residue" description="Phosphoserine" evidence="14">
    <location>
        <position position="404"/>
    </location>
</feature>
<feature type="modified residue" description="Phosphoserine" evidence="11 14">
    <location>
        <position position="430"/>
    </location>
</feature>
<feature type="modified residue" description="Phosphoserine" evidence="11 14">
    <location>
        <position position="443"/>
    </location>
</feature>
<feature type="modified residue" description="Phosphoserine" evidence="14">
    <location>
        <position position="461"/>
    </location>
</feature>
<feature type="modified residue" description="Phosphoserine" evidence="1">
    <location>
        <position position="470"/>
    </location>
</feature>
<feature type="modified residue" description="Phosphoserine" evidence="14">
    <location>
        <position position="489"/>
    </location>
</feature>
<feature type="modified residue" description="Phosphoserine" evidence="10 11 12 14">
    <location>
        <position position="501"/>
    </location>
</feature>
<feature type="modified residue" description="Omega-N-methylarginine" evidence="1">
    <location>
        <position position="512"/>
    </location>
</feature>
<feature type="modified residue" description="Phosphoserine" evidence="14">
    <location>
        <position position="518"/>
    </location>
</feature>
<feature type="modified residue" description="Phosphoserine" evidence="11 13 14">
    <location>
        <position position="520"/>
    </location>
</feature>
<feature type="modified residue" description="Phosphothreonine" evidence="13">
    <location>
        <position position="522"/>
    </location>
</feature>
<feature type="modified residue" description="Phosphoserine" evidence="1">
    <location>
        <position position="533"/>
    </location>
</feature>
<feature type="modified residue" description="Phosphoserine" evidence="1">
    <location>
        <position position="539"/>
    </location>
</feature>
<feature type="modified residue" description="Phosphoserine" evidence="11">
    <location>
        <position position="551"/>
    </location>
</feature>
<feature type="modified residue" description="Phosphoserine" evidence="11">
    <location>
        <position position="555"/>
    </location>
</feature>
<feature type="modified residue" description="Phosphoserine" evidence="14">
    <location>
        <position position="563"/>
    </location>
</feature>
<feature type="modified residue" description="Phosphoserine" evidence="14">
    <location>
        <position position="578"/>
    </location>
</feature>
<feature type="modified residue" description="Phosphoserine" evidence="11 14">
    <location>
        <position position="583"/>
    </location>
</feature>
<feature type="modified residue" description="Phosphoserine" evidence="14">
    <location>
        <position position="678"/>
    </location>
</feature>
<feature type="modified residue" description="Phosphoserine" evidence="14">
    <location>
        <position position="971"/>
    </location>
</feature>
<feature type="modified residue" description="Phosphoserine" evidence="1">
    <location>
        <position position="1017"/>
    </location>
</feature>
<feature type="splice variant" id="VSP_016737" description="In isoform 2 and isoform 3." evidence="6 7">
    <location>
        <begin position="913"/>
        <end position="959"/>
    </location>
</feature>
<feature type="splice variant" id="VSP_016738" description="In isoform 3." evidence="7">
    <original>Q</original>
    <variation>E</variation>
    <location>
        <position position="1042"/>
    </location>
</feature>
<feature type="splice variant" id="VSP_016739" description="In isoform 3." evidence="7">
    <location>
        <begin position="1043"/>
        <end position="1377"/>
    </location>
</feature>
<feature type="splice variant" id="VSP_016740" description="In isoform 2." evidence="6">
    <location>
        <begin position="1321"/>
        <end position="1331"/>
    </location>
</feature>
<name>PHLB1_HUMAN</name>
<organism>
    <name type="scientific">Homo sapiens</name>
    <name type="common">Human</name>
    <dbReference type="NCBI Taxonomy" id="9606"/>
    <lineage>
        <taxon>Eukaryota</taxon>
        <taxon>Metazoa</taxon>
        <taxon>Chordata</taxon>
        <taxon>Craniata</taxon>
        <taxon>Vertebrata</taxon>
        <taxon>Euteleostomi</taxon>
        <taxon>Mammalia</taxon>
        <taxon>Eutheria</taxon>
        <taxon>Euarchontoglires</taxon>
        <taxon>Primates</taxon>
        <taxon>Haplorrhini</taxon>
        <taxon>Catarrhini</taxon>
        <taxon>Hominidae</taxon>
        <taxon>Homo</taxon>
    </lineage>
</organism>
<proteinExistence type="evidence at protein level"/>
<gene>
    <name type="primary">PHLDB1</name>
    <name type="synonym">KIAA0638</name>
    <name type="synonym">LL5A</name>
    <name type="ORF">DLNB07</name>
</gene>
<dbReference type="EMBL" id="AB094090">
    <property type="protein sequence ID" value="BAC76044.1"/>
    <property type="molecule type" value="mRNA"/>
</dbReference>
<dbReference type="EMBL" id="AB014538">
    <property type="protein sequence ID" value="BAA31613.2"/>
    <property type="status" value="ALT_INIT"/>
    <property type="molecule type" value="mRNA"/>
</dbReference>
<dbReference type="EMBL" id="AK074070">
    <property type="protein sequence ID" value="BAB84896.2"/>
    <property type="status" value="ALT_INIT"/>
    <property type="molecule type" value="mRNA"/>
</dbReference>
<dbReference type="EMBL" id="EF445008">
    <property type="protein sequence ID" value="ACA06043.1"/>
    <property type="molecule type" value="Genomic_DNA"/>
</dbReference>
<dbReference type="EMBL" id="EF445008">
    <property type="protein sequence ID" value="ACA06041.1"/>
    <property type="molecule type" value="Genomic_DNA"/>
</dbReference>
<dbReference type="EMBL" id="AP000941">
    <property type="status" value="NOT_ANNOTATED_CDS"/>
    <property type="molecule type" value="Genomic_DNA"/>
</dbReference>
<dbReference type="EMBL" id="AP002954">
    <property type="status" value="NOT_ANNOTATED_CDS"/>
    <property type="molecule type" value="Genomic_DNA"/>
</dbReference>
<dbReference type="EMBL" id="CH471065">
    <property type="protein sequence ID" value="EAW67401.1"/>
    <property type="molecule type" value="Genomic_DNA"/>
</dbReference>
<dbReference type="EMBL" id="BC098586">
    <property type="protein sequence ID" value="AAH98586.1"/>
    <property type="molecule type" value="mRNA"/>
</dbReference>
<dbReference type="CCDS" id="CCDS44750.1">
    <molecule id="Q86UU1-2"/>
</dbReference>
<dbReference type="CCDS" id="CCDS8401.1">
    <molecule id="Q86UU1-1"/>
</dbReference>
<dbReference type="RefSeq" id="NP_001138230.1">
    <molecule id="Q86UU1-1"/>
    <property type="nucleotide sequence ID" value="NM_001144758.3"/>
</dbReference>
<dbReference type="RefSeq" id="NP_001138231.1">
    <molecule id="Q86UU1-2"/>
    <property type="nucleotide sequence ID" value="NM_001144759.3"/>
</dbReference>
<dbReference type="RefSeq" id="NP_055972.1">
    <molecule id="Q86UU1-1"/>
    <property type="nucleotide sequence ID" value="NM_015157.4"/>
</dbReference>
<dbReference type="RefSeq" id="XP_047282595.1">
    <molecule id="Q86UU1-2"/>
    <property type="nucleotide sequence ID" value="XM_047426639.1"/>
</dbReference>
<dbReference type="RefSeq" id="XP_047282596.1">
    <molecule id="Q86UU1-2"/>
    <property type="nucleotide sequence ID" value="XM_047426640.1"/>
</dbReference>
<dbReference type="RefSeq" id="XP_054224150.1">
    <molecule id="Q86UU1-2"/>
    <property type="nucleotide sequence ID" value="XM_054368175.1"/>
</dbReference>
<dbReference type="RefSeq" id="XP_054224151.1">
    <molecule id="Q86UU1-2"/>
    <property type="nucleotide sequence ID" value="XM_054368176.1"/>
</dbReference>
<dbReference type="SMR" id="Q86UU1"/>
<dbReference type="BioGRID" id="116797">
    <property type="interactions" value="48"/>
</dbReference>
<dbReference type="FunCoup" id="Q86UU1">
    <property type="interactions" value="1430"/>
</dbReference>
<dbReference type="IntAct" id="Q86UU1">
    <property type="interactions" value="27"/>
</dbReference>
<dbReference type="MINT" id="Q86UU1"/>
<dbReference type="STRING" id="9606.ENSP00000354498"/>
<dbReference type="GlyGen" id="Q86UU1">
    <property type="glycosylation" value="3 sites, 1 N-linked glycan (1 site), 1 O-linked glycan (2 sites)"/>
</dbReference>
<dbReference type="iPTMnet" id="Q86UU1"/>
<dbReference type="PhosphoSitePlus" id="Q86UU1"/>
<dbReference type="BioMuta" id="PHLDB1"/>
<dbReference type="DMDM" id="74723506"/>
<dbReference type="jPOST" id="Q86UU1"/>
<dbReference type="MassIVE" id="Q86UU1"/>
<dbReference type="PaxDb" id="9606-ENSP00000354498"/>
<dbReference type="PeptideAtlas" id="Q86UU1"/>
<dbReference type="ProteomicsDB" id="69894">
    <molecule id="Q86UU1-1"/>
</dbReference>
<dbReference type="ProteomicsDB" id="69895">
    <molecule id="Q86UU1-2"/>
</dbReference>
<dbReference type="ProteomicsDB" id="69896">
    <molecule id="Q86UU1-3"/>
</dbReference>
<dbReference type="Pumba" id="Q86UU1"/>
<dbReference type="Antibodypedia" id="45815">
    <property type="antibodies" value="68 antibodies from 14 providers"/>
</dbReference>
<dbReference type="DNASU" id="23187"/>
<dbReference type="Ensembl" id="ENST00000356063.9">
    <molecule id="Q86UU1-2"/>
    <property type="protein sequence ID" value="ENSP00000348359.5"/>
    <property type="gene ID" value="ENSG00000019144.20"/>
</dbReference>
<dbReference type="Ensembl" id="ENST00000361417.6">
    <molecule id="Q86UU1-1"/>
    <property type="protein sequence ID" value="ENSP00000354498.2"/>
    <property type="gene ID" value="ENSG00000019144.20"/>
</dbReference>
<dbReference type="Ensembl" id="ENST00000528594.5">
    <molecule id="Q86UU1-3"/>
    <property type="protein sequence ID" value="ENSP00000435520.1"/>
    <property type="gene ID" value="ENSG00000019144.20"/>
</dbReference>
<dbReference type="Ensembl" id="ENST00000530994.5">
    <molecule id="Q86UU1-3"/>
    <property type="protein sequence ID" value="ENSP00000431508.1"/>
    <property type="gene ID" value="ENSG00000019144.20"/>
</dbReference>
<dbReference type="Ensembl" id="ENST00000600882.6">
    <molecule id="Q86UU1-1"/>
    <property type="protein sequence ID" value="ENSP00000469820.1"/>
    <property type="gene ID" value="ENSG00000019144.20"/>
</dbReference>
<dbReference type="GeneID" id="23187"/>
<dbReference type="KEGG" id="hsa:23187"/>
<dbReference type="MANE-Select" id="ENST00000600882.6">
    <property type="protein sequence ID" value="ENSP00000469820.1"/>
    <property type="RefSeq nucleotide sequence ID" value="NM_001144758.3"/>
    <property type="RefSeq protein sequence ID" value="NP_001138230.1"/>
</dbReference>
<dbReference type="UCSC" id="uc001ptr.3">
    <molecule id="Q86UU1-1"/>
    <property type="organism name" value="human"/>
</dbReference>
<dbReference type="AGR" id="HGNC:23697"/>
<dbReference type="CTD" id="23187"/>
<dbReference type="DisGeNET" id="23187"/>
<dbReference type="GeneCards" id="PHLDB1"/>
<dbReference type="HGNC" id="HGNC:23697">
    <property type="gene designation" value="PHLDB1"/>
</dbReference>
<dbReference type="HPA" id="ENSG00000019144">
    <property type="expression patterns" value="Low tissue specificity"/>
</dbReference>
<dbReference type="MalaCards" id="PHLDB1"/>
<dbReference type="MIM" id="612834">
    <property type="type" value="gene"/>
</dbReference>
<dbReference type="MIM" id="620639">
    <property type="type" value="phenotype"/>
</dbReference>
<dbReference type="neXtProt" id="NX_Q86UU1"/>
<dbReference type="OpenTargets" id="ENSG00000019144"/>
<dbReference type="PharmGKB" id="PA134917952"/>
<dbReference type="VEuPathDB" id="HostDB:ENSG00000019144"/>
<dbReference type="eggNOG" id="ENOG502QPZY">
    <property type="taxonomic scope" value="Eukaryota"/>
</dbReference>
<dbReference type="GeneTree" id="ENSGT00940000155231"/>
<dbReference type="HOGENOM" id="CLU_003180_0_0_1"/>
<dbReference type="InParanoid" id="Q86UU1"/>
<dbReference type="OMA" id="DKKSPFQ"/>
<dbReference type="OrthoDB" id="6020705at2759"/>
<dbReference type="PAN-GO" id="Q86UU1">
    <property type="GO annotations" value="2 GO annotations based on evolutionary models"/>
</dbReference>
<dbReference type="PhylomeDB" id="Q86UU1"/>
<dbReference type="TreeFam" id="TF329165"/>
<dbReference type="PathwayCommons" id="Q86UU1"/>
<dbReference type="SignaLink" id="Q86UU1"/>
<dbReference type="BioGRID-ORCS" id="23187">
    <property type="hits" value="16 hits in 1160 CRISPR screens"/>
</dbReference>
<dbReference type="CD-CODE" id="FB4E32DD">
    <property type="entry name" value="Presynaptic clusters and postsynaptic densities"/>
</dbReference>
<dbReference type="ChiTaRS" id="PHLDB1">
    <property type="organism name" value="human"/>
</dbReference>
<dbReference type="GeneWiki" id="PHLDB1"/>
<dbReference type="GenomeRNAi" id="23187"/>
<dbReference type="Pharos" id="Q86UU1">
    <property type="development level" value="Tbio"/>
</dbReference>
<dbReference type="PRO" id="PR:Q86UU1"/>
<dbReference type="Proteomes" id="UP000005640">
    <property type="component" value="Chromosome 11"/>
</dbReference>
<dbReference type="RNAct" id="Q86UU1">
    <property type="molecule type" value="protein"/>
</dbReference>
<dbReference type="Bgee" id="ENSG00000019144">
    <property type="expression patterns" value="Expressed in sural nerve and 205 other cell types or tissues"/>
</dbReference>
<dbReference type="ExpressionAtlas" id="Q86UU1">
    <property type="expression patterns" value="baseline and differential"/>
</dbReference>
<dbReference type="GO" id="GO:0045180">
    <property type="term" value="C:basal cortex"/>
    <property type="evidence" value="ECO:0000314"/>
    <property type="project" value="UniProtKB"/>
</dbReference>
<dbReference type="GO" id="GO:0071711">
    <property type="term" value="P:basement membrane organization"/>
    <property type="evidence" value="ECO:0000315"/>
    <property type="project" value="UniProtKB"/>
</dbReference>
<dbReference type="GO" id="GO:0070507">
    <property type="term" value="P:regulation of microtubule cytoskeleton organization"/>
    <property type="evidence" value="ECO:0000318"/>
    <property type="project" value="GO_Central"/>
</dbReference>
<dbReference type="CDD" id="cd22713">
    <property type="entry name" value="FHA_PHLB1"/>
    <property type="match status" value="1"/>
</dbReference>
<dbReference type="CDD" id="cd14673">
    <property type="entry name" value="PH_PHLDB1_2"/>
    <property type="match status" value="1"/>
</dbReference>
<dbReference type="FunFam" id="2.30.29.30:FF:000006">
    <property type="entry name" value="Pleckstrin homology like domain family B member 1"/>
    <property type="match status" value="1"/>
</dbReference>
<dbReference type="FunFam" id="2.60.200.20:FF:000004">
    <property type="entry name" value="pleckstrin homology-like domain family B member 1 isoform X1"/>
    <property type="match status" value="1"/>
</dbReference>
<dbReference type="Gene3D" id="2.60.200.20">
    <property type="match status" value="1"/>
</dbReference>
<dbReference type="Gene3D" id="2.30.29.30">
    <property type="entry name" value="Pleckstrin-homology domain (PH domain)/Phosphotyrosine-binding domain (PTB)"/>
    <property type="match status" value="1"/>
</dbReference>
<dbReference type="InterPro" id="IPR000253">
    <property type="entry name" value="FHA_dom"/>
</dbReference>
<dbReference type="InterPro" id="IPR011993">
    <property type="entry name" value="PH-like_dom_sf"/>
</dbReference>
<dbReference type="InterPro" id="IPR052212">
    <property type="entry name" value="PH-like_domain"/>
</dbReference>
<dbReference type="InterPro" id="IPR001849">
    <property type="entry name" value="PH_domain"/>
</dbReference>
<dbReference type="InterPro" id="IPR037810">
    <property type="entry name" value="PHLDB1/2/3_PH"/>
</dbReference>
<dbReference type="InterPro" id="IPR008984">
    <property type="entry name" value="SMAD_FHA_dom_sf"/>
</dbReference>
<dbReference type="PANTHER" id="PTHR12156:SF23">
    <property type="entry name" value="PLECKSTRIN HOMOLOGY-LIKE DOMAIN FAMILY B MEMBER 1"/>
    <property type="match status" value="1"/>
</dbReference>
<dbReference type="PANTHER" id="PTHR12156">
    <property type="entry name" value="PLECKSTRIN HOMOLOGY-LIKE DOMAIN, FAMILY B, MEMBER 3"/>
    <property type="match status" value="1"/>
</dbReference>
<dbReference type="Pfam" id="PF00498">
    <property type="entry name" value="FHA"/>
    <property type="match status" value="1"/>
</dbReference>
<dbReference type="Pfam" id="PF00169">
    <property type="entry name" value="PH"/>
    <property type="match status" value="1"/>
</dbReference>
<dbReference type="SMART" id="SM00233">
    <property type="entry name" value="PH"/>
    <property type="match status" value="1"/>
</dbReference>
<dbReference type="SUPFAM" id="SSF50729">
    <property type="entry name" value="PH domain-like"/>
    <property type="match status" value="1"/>
</dbReference>
<dbReference type="SUPFAM" id="SSF49879">
    <property type="entry name" value="SMAD/FHA domain"/>
    <property type="match status" value="1"/>
</dbReference>
<dbReference type="PROSITE" id="PS50003">
    <property type="entry name" value="PH_DOMAIN"/>
    <property type="match status" value="1"/>
</dbReference>